<sequence length="414" mass="45001">MVSTISRHDQNKNNDYLNQPSKEGRFGKYGGQYVPETLMPALFELEKAASDAWKDKQFVDELNHLLKTYVGRETPLYEAKRLTEHYQTKTCTSRIWLKREDLNHTGAHKINNALGQALLAIRMGKERIIAETGAGQHGVATATVCARFGLKCIIYMGAEDIKRQSLNVFRMKLLGAEVKVVTSGTATLKDATSEAIRDWVSNVETTHYILGSVAGPHPFPMIVRDFHAVIGEEAKKQCVESFGSLPDILLACVGGGSNAMGLFHPFVKEKSVRLIGVEAAGSGVNTDKHAATITKGSVGILHGSMSLLLQDKNGQVQEAHSISAGLDYPGVGPEHSYLKDIGRAEYGSVTDTEALNALKLVSELEGIIPALETAHAFAWLEKLCPTLEKNTEIVINCSGRGDKDVNTVASSLDI</sequence>
<name>TRPB_PROM5</name>
<organism>
    <name type="scientific">Prochlorococcus marinus (strain MIT 9515)</name>
    <dbReference type="NCBI Taxonomy" id="167542"/>
    <lineage>
        <taxon>Bacteria</taxon>
        <taxon>Bacillati</taxon>
        <taxon>Cyanobacteriota</taxon>
        <taxon>Cyanophyceae</taxon>
        <taxon>Synechococcales</taxon>
        <taxon>Prochlorococcaceae</taxon>
        <taxon>Prochlorococcus</taxon>
    </lineage>
</organism>
<comment type="function">
    <text evidence="1">The beta subunit is responsible for the synthesis of L-tryptophan from indole and L-serine.</text>
</comment>
<comment type="catalytic activity">
    <reaction evidence="1">
        <text>(1S,2R)-1-C-(indol-3-yl)glycerol 3-phosphate + L-serine = D-glyceraldehyde 3-phosphate + L-tryptophan + H2O</text>
        <dbReference type="Rhea" id="RHEA:10532"/>
        <dbReference type="ChEBI" id="CHEBI:15377"/>
        <dbReference type="ChEBI" id="CHEBI:33384"/>
        <dbReference type="ChEBI" id="CHEBI:57912"/>
        <dbReference type="ChEBI" id="CHEBI:58866"/>
        <dbReference type="ChEBI" id="CHEBI:59776"/>
        <dbReference type="EC" id="4.2.1.20"/>
    </reaction>
</comment>
<comment type="cofactor">
    <cofactor evidence="1">
        <name>pyridoxal 5'-phosphate</name>
        <dbReference type="ChEBI" id="CHEBI:597326"/>
    </cofactor>
</comment>
<comment type="pathway">
    <text evidence="1">Amino-acid biosynthesis; L-tryptophan biosynthesis; L-tryptophan from chorismate: step 5/5.</text>
</comment>
<comment type="subunit">
    <text evidence="1">Tetramer of two alpha and two beta chains.</text>
</comment>
<comment type="similarity">
    <text evidence="1">Belongs to the TrpB family.</text>
</comment>
<gene>
    <name evidence="1" type="primary">trpB</name>
    <name type="ordered locus">P9515_01931</name>
</gene>
<accession>A2BUE1</accession>
<reference key="1">
    <citation type="journal article" date="2007" name="PLoS Genet.">
        <title>Patterns and implications of gene gain and loss in the evolution of Prochlorococcus.</title>
        <authorList>
            <person name="Kettler G.C."/>
            <person name="Martiny A.C."/>
            <person name="Huang K."/>
            <person name="Zucker J."/>
            <person name="Coleman M.L."/>
            <person name="Rodrigue S."/>
            <person name="Chen F."/>
            <person name="Lapidus A."/>
            <person name="Ferriera S."/>
            <person name="Johnson J."/>
            <person name="Steglich C."/>
            <person name="Church G.M."/>
            <person name="Richardson P."/>
            <person name="Chisholm S.W."/>
        </authorList>
    </citation>
    <scope>NUCLEOTIDE SEQUENCE [LARGE SCALE GENOMIC DNA]</scope>
    <source>
        <strain>MIT 9515</strain>
    </source>
</reference>
<evidence type="ECO:0000255" key="1">
    <source>
        <dbReference type="HAMAP-Rule" id="MF_00133"/>
    </source>
</evidence>
<evidence type="ECO:0000256" key="2">
    <source>
        <dbReference type="SAM" id="MobiDB-lite"/>
    </source>
</evidence>
<feature type="chain" id="PRO_1000018370" description="Tryptophan synthase beta chain">
    <location>
        <begin position="1"/>
        <end position="414"/>
    </location>
</feature>
<feature type="region of interest" description="Disordered" evidence="2">
    <location>
        <begin position="1"/>
        <end position="23"/>
    </location>
</feature>
<feature type="compositionally biased region" description="Basic and acidic residues" evidence="2">
    <location>
        <begin position="1"/>
        <end position="12"/>
    </location>
</feature>
<feature type="modified residue" description="N6-(pyridoxal phosphate)lysine" evidence="1">
    <location>
        <position position="109"/>
    </location>
</feature>
<proteinExistence type="inferred from homology"/>
<dbReference type="EC" id="4.2.1.20" evidence="1"/>
<dbReference type="EMBL" id="CP000552">
    <property type="protein sequence ID" value="ABM71402.1"/>
    <property type="molecule type" value="Genomic_DNA"/>
</dbReference>
<dbReference type="RefSeq" id="WP_011819516.1">
    <property type="nucleotide sequence ID" value="NC_008817.1"/>
</dbReference>
<dbReference type="SMR" id="A2BUE1"/>
<dbReference type="STRING" id="167542.P9515_01931"/>
<dbReference type="GeneID" id="60200440"/>
<dbReference type="KEGG" id="pmc:P9515_01931"/>
<dbReference type="eggNOG" id="COG0133">
    <property type="taxonomic scope" value="Bacteria"/>
</dbReference>
<dbReference type="HOGENOM" id="CLU_016734_3_1_3"/>
<dbReference type="OrthoDB" id="9766131at2"/>
<dbReference type="UniPathway" id="UPA00035">
    <property type="reaction ID" value="UER00044"/>
</dbReference>
<dbReference type="Proteomes" id="UP000001589">
    <property type="component" value="Chromosome"/>
</dbReference>
<dbReference type="GO" id="GO:0005737">
    <property type="term" value="C:cytoplasm"/>
    <property type="evidence" value="ECO:0007669"/>
    <property type="project" value="TreeGrafter"/>
</dbReference>
<dbReference type="GO" id="GO:0004834">
    <property type="term" value="F:tryptophan synthase activity"/>
    <property type="evidence" value="ECO:0007669"/>
    <property type="project" value="UniProtKB-UniRule"/>
</dbReference>
<dbReference type="CDD" id="cd06446">
    <property type="entry name" value="Trp-synth_B"/>
    <property type="match status" value="1"/>
</dbReference>
<dbReference type="FunFam" id="3.40.50.1100:FF:000001">
    <property type="entry name" value="Tryptophan synthase beta chain"/>
    <property type="match status" value="1"/>
</dbReference>
<dbReference type="FunFam" id="3.40.50.1100:FF:000004">
    <property type="entry name" value="Tryptophan synthase beta chain"/>
    <property type="match status" value="1"/>
</dbReference>
<dbReference type="Gene3D" id="3.40.50.1100">
    <property type="match status" value="2"/>
</dbReference>
<dbReference type="HAMAP" id="MF_00133">
    <property type="entry name" value="Trp_synth_beta"/>
    <property type="match status" value="1"/>
</dbReference>
<dbReference type="InterPro" id="IPR006653">
    <property type="entry name" value="Trp_synth_b_CS"/>
</dbReference>
<dbReference type="InterPro" id="IPR006654">
    <property type="entry name" value="Trp_synth_beta"/>
</dbReference>
<dbReference type="InterPro" id="IPR023026">
    <property type="entry name" value="Trp_synth_beta/beta-like"/>
</dbReference>
<dbReference type="InterPro" id="IPR001926">
    <property type="entry name" value="TrpB-like_PALP"/>
</dbReference>
<dbReference type="InterPro" id="IPR036052">
    <property type="entry name" value="TrpB-like_PALP_sf"/>
</dbReference>
<dbReference type="NCBIfam" id="TIGR00263">
    <property type="entry name" value="trpB"/>
    <property type="match status" value="1"/>
</dbReference>
<dbReference type="PANTHER" id="PTHR48077:SF3">
    <property type="entry name" value="TRYPTOPHAN SYNTHASE"/>
    <property type="match status" value="1"/>
</dbReference>
<dbReference type="PANTHER" id="PTHR48077">
    <property type="entry name" value="TRYPTOPHAN SYNTHASE-RELATED"/>
    <property type="match status" value="1"/>
</dbReference>
<dbReference type="Pfam" id="PF00291">
    <property type="entry name" value="PALP"/>
    <property type="match status" value="1"/>
</dbReference>
<dbReference type="PIRSF" id="PIRSF001413">
    <property type="entry name" value="Trp_syn_beta"/>
    <property type="match status" value="1"/>
</dbReference>
<dbReference type="SUPFAM" id="SSF53686">
    <property type="entry name" value="Tryptophan synthase beta subunit-like PLP-dependent enzymes"/>
    <property type="match status" value="1"/>
</dbReference>
<dbReference type="PROSITE" id="PS00168">
    <property type="entry name" value="TRP_SYNTHASE_BETA"/>
    <property type="match status" value="1"/>
</dbReference>
<protein>
    <recommendedName>
        <fullName evidence="1">Tryptophan synthase beta chain</fullName>
        <ecNumber evidence="1">4.2.1.20</ecNumber>
    </recommendedName>
</protein>
<keyword id="KW-0028">Amino-acid biosynthesis</keyword>
<keyword id="KW-0057">Aromatic amino acid biosynthesis</keyword>
<keyword id="KW-0456">Lyase</keyword>
<keyword id="KW-0663">Pyridoxal phosphate</keyword>
<keyword id="KW-0822">Tryptophan biosynthesis</keyword>